<reference key="1">
    <citation type="journal article" date="2000" name="Proc. Natl. Acad. Sci. U.S.A.">
        <title>Genome sequence of Halobacterium species NRC-1.</title>
        <authorList>
            <person name="Ng W.V."/>
            <person name="Kennedy S.P."/>
            <person name="Mahairas G.G."/>
            <person name="Berquist B."/>
            <person name="Pan M."/>
            <person name="Shukla H.D."/>
            <person name="Lasky S.R."/>
            <person name="Baliga N.S."/>
            <person name="Thorsson V."/>
            <person name="Sbrogna J."/>
            <person name="Swartzell S."/>
            <person name="Weir D."/>
            <person name="Hall J."/>
            <person name="Dahl T.A."/>
            <person name="Welti R."/>
            <person name="Goo Y.A."/>
            <person name="Leithauser B."/>
            <person name="Keller K."/>
            <person name="Cruz R."/>
            <person name="Danson M.J."/>
            <person name="Hough D.W."/>
            <person name="Maddocks D.G."/>
            <person name="Jablonski P.E."/>
            <person name="Krebs M.P."/>
            <person name="Angevine C.M."/>
            <person name="Dale H."/>
            <person name="Isenbarger T.A."/>
            <person name="Peck R.F."/>
            <person name="Pohlschroder M."/>
            <person name="Spudich J.L."/>
            <person name="Jung K.-H."/>
            <person name="Alam M."/>
            <person name="Freitas T."/>
            <person name="Hou S."/>
            <person name="Daniels C.J."/>
            <person name="Dennis P.P."/>
            <person name="Omer A.D."/>
            <person name="Ebhardt H."/>
            <person name="Lowe T.M."/>
            <person name="Liang P."/>
            <person name="Riley M."/>
            <person name="Hood L."/>
            <person name="DasSarma S."/>
        </authorList>
    </citation>
    <scope>NUCLEOTIDE SEQUENCE [LARGE SCALE GENOMIC DNA]</scope>
    <source>
        <strain>ATCC 700922 / JCM 11081 / NRC-1</strain>
    </source>
</reference>
<accession>Q9HME3</accession>
<keyword id="KW-0648">Protein biosynthesis</keyword>
<keyword id="KW-1185">Reference proteome</keyword>
<keyword id="KW-0810">Translation regulation</keyword>
<gene>
    <name type="ordered locus">VNG_2584C</name>
</gene>
<organism>
    <name type="scientific">Halobacterium salinarum (strain ATCC 700922 / JCM 11081 / NRC-1)</name>
    <name type="common">Halobacterium halobium</name>
    <dbReference type="NCBI Taxonomy" id="64091"/>
    <lineage>
        <taxon>Archaea</taxon>
        <taxon>Methanobacteriati</taxon>
        <taxon>Methanobacteriota</taxon>
        <taxon>Stenosarchaea group</taxon>
        <taxon>Halobacteria</taxon>
        <taxon>Halobacteriales</taxon>
        <taxon>Halobacteriaceae</taxon>
        <taxon>Halobacterium</taxon>
        <taxon>Halobacterium salinarum NRC-34001</taxon>
    </lineage>
</organism>
<protein>
    <recommendedName>
        <fullName evidence="1">Protein translation factor SUI1 homolog</fullName>
    </recommendedName>
</protein>
<proteinExistence type="inferred from homology"/>
<comment type="similarity">
    <text evidence="1">Belongs to the SUI1 family.</text>
</comment>
<dbReference type="EMBL" id="AE004437">
    <property type="protein sequence ID" value="AAG20628.1"/>
    <property type="molecule type" value="Genomic_DNA"/>
</dbReference>
<dbReference type="PIR" id="H84407">
    <property type="entry name" value="H84407"/>
</dbReference>
<dbReference type="SMR" id="Q9HME3"/>
<dbReference type="FunCoup" id="Q9HME3">
    <property type="interactions" value="77"/>
</dbReference>
<dbReference type="STRING" id="64091.VNG_2584C"/>
<dbReference type="PaxDb" id="64091-VNG_2584C"/>
<dbReference type="KEGG" id="hal:VNG_2584C"/>
<dbReference type="PATRIC" id="fig|64091.14.peg.2001"/>
<dbReference type="HOGENOM" id="CLU_082805_6_1_2"/>
<dbReference type="InParanoid" id="Q9HME3"/>
<dbReference type="OrthoDB" id="11182at2157"/>
<dbReference type="PhylomeDB" id="Q9HME3"/>
<dbReference type="Proteomes" id="UP000000554">
    <property type="component" value="Chromosome"/>
</dbReference>
<dbReference type="GO" id="GO:0003743">
    <property type="term" value="F:translation initiation factor activity"/>
    <property type="evidence" value="ECO:0007669"/>
    <property type="project" value="InterPro"/>
</dbReference>
<dbReference type="GO" id="GO:0001731">
    <property type="term" value="P:formation of translation preinitiation complex"/>
    <property type="evidence" value="ECO:0000318"/>
    <property type="project" value="GO_Central"/>
</dbReference>
<dbReference type="GO" id="GO:0006417">
    <property type="term" value="P:regulation of translation"/>
    <property type="evidence" value="ECO:0007669"/>
    <property type="project" value="UniProtKB-UniRule"/>
</dbReference>
<dbReference type="GO" id="GO:0002188">
    <property type="term" value="P:translation reinitiation"/>
    <property type="evidence" value="ECO:0000318"/>
    <property type="project" value="GO_Central"/>
</dbReference>
<dbReference type="CDD" id="cd11567">
    <property type="entry name" value="YciH_like"/>
    <property type="match status" value="1"/>
</dbReference>
<dbReference type="FunFam" id="3.30.780.10:FF:000006">
    <property type="entry name" value="Protein translation factor SUI1 homolog"/>
    <property type="match status" value="1"/>
</dbReference>
<dbReference type="Gene3D" id="3.30.780.10">
    <property type="entry name" value="SUI1-like domain"/>
    <property type="match status" value="1"/>
</dbReference>
<dbReference type="HAMAP" id="MF_00604">
    <property type="entry name" value="SUI1"/>
    <property type="match status" value="1"/>
</dbReference>
<dbReference type="InterPro" id="IPR050318">
    <property type="entry name" value="DENR/SUI1_TIF"/>
</dbReference>
<dbReference type="InterPro" id="IPR001950">
    <property type="entry name" value="SUI1"/>
</dbReference>
<dbReference type="InterPro" id="IPR022851">
    <property type="entry name" value="SUI1_arc"/>
</dbReference>
<dbReference type="InterPro" id="IPR005872">
    <property type="entry name" value="SUI1_arc_bac"/>
</dbReference>
<dbReference type="InterPro" id="IPR036877">
    <property type="entry name" value="SUI1_dom_sf"/>
</dbReference>
<dbReference type="NCBIfam" id="NF002096">
    <property type="entry name" value="PRK00939.1"/>
    <property type="match status" value="1"/>
</dbReference>
<dbReference type="NCBIfam" id="TIGR01158">
    <property type="entry name" value="SUI1_rel"/>
    <property type="match status" value="1"/>
</dbReference>
<dbReference type="PANTHER" id="PTHR12789:SF0">
    <property type="entry name" value="DENSITY-REGULATED PROTEIN"/>
    <property type="match status" value="1"/>
</dbReference>
<dbReference type="PANTHER" id="PTHR12789">
    <property type="entry name" value="DENSITY-REGULATED PROTEIN HOMOLOG"/>
    <property type="match status" value="1"/>
</dbReference>
<dbReference type="Pfam" id="PF01253">
    <property type="entry name" value="SUI1"/>
    <property type="match status" value="1"/>
</dbReference>
<dbReference type="PIRSF" id="PIRSF037511">
    <property type="entry name" value="Transl_init_SUI1_pro"/>
    <property type="match status" value="1"/>
</dbReference>
<dbReference type="SUPFAM" id="SSF55159">
    <property type="entry name" value="eIF1-like"/>
    <property type="match status" value="1"/>
</dbReference>
<dbReference type="PROSITE" id="PS50296">
    <property type="entry name" value="SUI1"/>
    <property type="match status" value="1"/>
</dbReference>
<evidence type="ECO:0000255" key="1">
    <source>
        <dbReference type="HAMAP-Rule" id="MF_00604"/>
    </source>
</evidence>
<feature type="chain" id="PRO_0000130578" description="Protein translation factor SUI1 homolog">
    <location>
        <begin position="1"/>
        <end position="97"/>
    </location>
</feature>
<sequence length="97" mass="10716">MSEVCSTCGLPEELCVCEDVAKESQQIEIRIDERRYGKEVTVIEGFDPKDVDLDSLSSDLKSKFACGGTVEDGEIELQGNHSGRVEDFLRNKGFNVA</sequence>
<name>SUI1_HALSA</name>